<protein>
    <recommendedName>
        <fullName evidence="1">Argininosuccinate lyase</fullName>
        <shortName evidence="1">ASAL</shortName>
        <ecNumber evidence="1">4.3.2.1</ecNumber>
    </recommendedName>
    <alternativeName>
        <fullName evidence="1">Arginosuccinase</fullName>
    </alternativeName>
</protein>
<evidence type="ECO:0000255" key="1">
    <source>
        <dbReference type="HAMAP-Rule" id="MF_00006"/>
    </source>
</evidence>
<name>ARLY_LISIN</name>
<keyword id="KW-0028">Amino-acid biosynthesis</keyword>
<keyword id="KW-0055">Arginine biosynthesis</keyword>
<keyword id="KW-0963">Cytoplasm</keyword>
<keyword id="KW-0456">Lyase</keyword>
<feature type="chain" id="PRO_0000137785" description="Argininosuccinate lyase">
    <location>
        <begin position="1"/>
        <end position="456"/>
    </location>
</feature>
<comment type="catalytic activity">
    <reaction evidence="1">
        <text>2-(N(omega)-L-arginino)succinate = fumarate + L-arginine</text>
        <dbReference type="Rhea" id="RHEA:24020"/>
        <dbReference type="ChEBI" id="CHEBI:29806"/>
        <dbReference type="ChEBI" id="CHEBI:32682"/>
        <dbReference type="ChEBI" id="CHEBI:57472"/>
        <dbReference type="EC" id="4.3.2.1"/>
    </reaction>
</comment>
<comment type="pathway">
    <text evidence="1">Amino-acid biosynthesis; L-arginine biosynthesis; L-arginine from L-ornithine and carbamoyl phosphate: step 3/3.</text>
</comment>
<comment type="subcellular location">
    <subcellularLocation>
        <location evidence="1">Cytoplasm</location>
    </subcellularLocation>
</comment>
<comment type="similarity">
    <text evidence="1">Belongs to the lyase 1 family. Argininosuccinate lyase subfamily.</text>
</comment>
<gene>
    <name evidence="1" type="primary">argH</name>
    <name type="ordered locus">lin2196</name>
</gene>
<reference key="1">
    <citation type="journal article" date="2001" name="Science">
        <title>Comparative genomics of Listeria species.</title>
        <authorList>
            <person name="Glaser P."/>
            <person name="Frangeul L."/>
            <person name="Buchrieser C."/>
            <person name="Rusniok C."/>
            <person name="Amend A."/>
            <person name="Baquero F."/>
            <person name="Berche P."/>
            <person name="Bloecker H."/>
            <person name="Brandt P."/>
            <person name="Chakraborty T."/>
            <person name="Charbit A."/>
            <person name="Chetouani F."/>
            <person name="Couve E."/>
            <person name="de Daruvar A."/>
            <person name="Dehoux P."/>
            <person name="Domann E."/>
            <person name="Dominguez-Bernal G."/>
            <person name="Duchaud E."/>
            <person name="Durant L."/>
            <person name="Dussurget O."/>
            <person name="Entian K.-D."/>
            <person name="Fsihi H."/>
            <person name="Garcia-del Portillo F."/>
            <person name="Garrido P."/>
            <person name="Gautier L."/>
            <person name="Goebel W."/>
            <person name="Gomez-Lopez N."/>
            <person name="Hain T."/>
            <person name="Hauf J."/>
            <person name="Jackson D."/>
            <person name="Jones L.-M."/>
            <person name="Kaerst U."/>
            <person name="Kreft J."/>
            <person name="Kuhn M."/>
            <person name="Kunst F."/>
            <person name="Kurapkat G."/>
            <person name="Madueno E."/>
            <person name="Maitournam A."/>
            <person name="Mata Vicente J."/>
            <person name="Ng E."/>
            <person name="Nedjari H."/>
            <person name="Nordsiek G."/>
            <person name="Novella S."/>
            <person name="de Pablos B."/>
            <person name="Perez-Diaz J.-C."/>
            <person name="Purcell R."/>
            <person name="Remmel B."/>
            <person name="Rose M."/>
            <person name="Schlueter T."/>
            <person name="Simoes N."/>
            <person name="Tierrez A."/>
            <person name="Vazquez-Boland J.-A."/>
            <person name="Voss H."/>
            <person name="Wehland J."/>
            <person name="Cossart P."/>
        </authorList>
    </citation>
    <scope>NUCLEOTIDE SEQUENCE [LARGE SCALE GENOMIC DNA]</scope>
    <source>
        <strain>ATCC BAA-680 / CLIP 11262</strain>
    </source>
</reference>
<dbReference type="EC" id="4.3.2.1" evidence="1"/>
<dbReference type="EMBL" id="AL596171">
    <property type="protein sequence ID" value="CAC97425.1"/>
    <property type="molecule type" value="Genomic_DNA"/>
</dbReference>
<dbReference type="PIR" id="AI1706">
    <property type="entry name" value="AI1706"/>
</dbReference>
<dbReference type="RefSeq" id="WP_010991062.1">
    <property type="nucleotide sequence ID" value="NC_003212.1"/>
</dbReference>
<dbReference type="SMR" id="Q929S8"/>
<dbReference type="STRING" id="272626.gene:17566554"/>
<dbReference type="KEGG" id="lin:argH"/>
<dbReference type="eggNOG" id="COG0165">
    <property type="taxonomic scope" value="Bacteria"/>
</dbReference>
<dbReference type="HOGENOM" id="CLU_027272_2_3_9"/>
<dbReference type="OrthoDB" id="9769623at2"/>
<dbReference type="UniPathway" id="UPA00068">
    <property type="reaction ID" value="UER00114"/>
</dbReference>
<dbReference type="Proteomes" id="UP000002513">
    <property type="component" value="Chromosome"/>
</dbReference>
<dbReference type="GO" id="GO:0005829">
    <property type="term" value="C:cytosol"/>
    <property type="evidence" value="ECO:0007669"/>
    <property type="project" value="TreeGrafter"/>
</dbReference>
<dbReference type="GO" id="GO:0004056">
    <property type="term" value="F:argininosuccinate lyase activity"/>
    <property type="evidence" value="ECO:0007669"/>
    <property type="project" value="UniProtKB-UniRule"/>
</dbReference>
<dbReference type="GO" id="GO:0042450">
    <property type="term" value="P:arginine biosynthetic process via ornithine"/>
    <property type="evidence" value="ECO:0007669"/>
    <property type="project" value="InterPro"/>
</dbReference>
<dbReference type="GO" id="GO:0006526">
    <property type="term" value="P:L-arginine biosynthetic process"/>
    <property type="evidence" value="ECO:0007669"/>
    <property type="project" value="UniProtKB-UniRule"/>
</dbReference>
<dbReference type="CDD" id="cd01359">
    <property type="entry name" value="Argininosuccinate_lyase"/>
    <property type="match status" value="1"/>
</dbReference>
<dbReference type="FunFam" id="1.10.275.10:FF:000002">
    <property type="entry name" value="Argininosuccinate lyase"/>
    <property type="match status" value="1"/>
</dbReference>
<dbReference type="FunFam" id="1.10.40.30:FF:000001">
    <property type="entry name" value="Argininosuccinate lyase"/>
    <property type="match status" value="1"/>
</dbReference>
<dbReference type="FunFam" id="1.20.200.10:FF:000006">
    <property type="entry name" value="Argininosuccinate lyase"/>
    <property type="match status" value="1"/>
</dbReference>
<dbReference type="Gene3D" id="1.10.40.30">
    <property type="entry name" value="Fumarase/aspartase (C-terminal domain)"/>
    <property type="match status" value="1"/>
</dbReference>
<dbReference type="Gene3D" id="1.20.200.10">
    <property type="entry name" value="Fumarase/aspartase (Central domain)"/>
    <property type="match status" value="1"/>
</dbReference>
<dbReference type="Gene3D" id="1.10.275.10">
    <property type="entry name" value="Fumarase/aspartase (N-terminal domain)"/>
    <property type="match status" value="1"/>
</dbReference>
<dbReference type="HAMAP" id="MF_00006">
    <property type="entry name" value="Arg_succ_lyase"/>
    <property type="match status" value="1"/>
</dbReference>
<dbReference type="InterPro" id="IPR029419">
    <property type="entry name" value="Arg_succ_lyase_C"/>
</dbReference>
<dbReference type="InterPro" id="IPR009049">
    <property type="entry name" value="Argininosuccinate_lyase"/>
</dbReference>
<dbReference type="InterPro" id="IPR024083">
    <property type="entry name" value="Fumarase/histidase_N"/>
</dbReference>
<dbReference type="InterPro" id="IPR020557">
    <property type="entry name" value="Fumarate_lyase_CS"/>
</dbReference>
<dbReference type="InterPro" id="IPR000362">
    <property type="entry name" value="Fumarate_lyase_fam"/>
</dbReference>
<dbReference type="InterPro" id="IPR022761">
    <property type="entry name" value="Fumarate_lyase_N"/>
</dbReference>
<dbReference type="InterPro" id="IPR008948">
    <property type="entry name" value="L-Aspartase-like"/>
</dbReference>
<dbReference type="NCBIfam" id="TIGR00838">
    <property type="entry name" value="argH"/>
    <property type="match status" value="1"/>
</dbReference>
<dbReference type="PANTHER" id="PTHR43814">
    <property type="entry name" value="ARGININOSUCCINATE LYASE"/>
    <property type="match status" value="1"/>
</dbReference>
<dbReference type="PANTHER" id="PTHR43814:SF1">
    <property type="entry name" value="ARGININOSUCCINATE LYASE"/>
    <property type="match status" value="1"/>
</dbReference>
<dbReference type="Pfam" id="PF14698">
    <property type="entry name" value="ASL_C2"/>
    <property type="match status" value="1"/>
</dbReference>
<dbReference type="Pfam" id="PF00206">
    <property type="entry name" value="Lyase_1"/>
    <property type="match status" value="1"/>
</dbReference>
<dbReference type="PRINTS" id="PR00145">
    <property type="entry name" value="ARGSUCLYASE"/>
</dbReference>
<dbReference type="PRINTS" id="PR00149">
    <property type="entry name" value="FUMRATELYASE"/>
</dbReference>
<dbReference type="SUPFAM" id="SSF48557">
    <property type="entry name" value="L-aspartase-like"/>
    <property type="match status" value="1"/>
</dbReference>
<dbReference type="PROSITE" id="PS00163">
    <property type="entry name" value="FUMARATE_LYASES"/>
    <property type="match status" value="1"/>
</dbReference>
<proteinExistence type="inferred from homology"/>
<sequence length="456" mass="50744">MEKLWGGRFQGKSEAWIDDFGASISFDQKMAKEDLAGSLAHVAMLAKCGIISDSEASEITAGLKILQEKLALGELEFSTVNEDIHLNIEKLLHEEIGPVAGKLHTARSRNDQVATDMHLYLKEAVAEIIQSLKHLRAVLVQKAEANVETIMPGYTHLQHAQPISFAHHLLAYFGMFTRDLERLEESVKRIDISPLGSAALAGTTFPIDRAYSAELLGFSAVYENSLDGVSDRDFIIEFLSNSSILMMHLSRFCEELILWTSHEFQFVELTDAFSTGSSIMPQKKNPDMAELIRGKTGRVYGNLFGMLTVLKGLPLAYNKDLQEDKEGMFDTLETVHTSLDIFAGMIETMKVNADIMEESTQKDFSNATELADYLAKKGVPFREAHEIVGKLVLECTQNGIYLQDVAFSHYQEIHPLIEEDIYTVLASKTAVQKRNSYGGTGFDQIHVALANAKKTL</sequence>
<accession>Q929S8</accession>
<organism>
    <name type="scientific">Listeria innocua serovar 6a (strain ATCC BAA-680 / CLIP 11262)</name>
    <dbReference type="NCBI Taxonomy" id="272626"/>
    <lineage>
        <taxon>Bacteria</taxon>
        <taxon>Bacillati</taxon>
        <taxon>Bacillota</taxon>
        <taxon>Bacilli</taxon>
        <taxon>Bacillales</taxon>
        <taxon>Listeriaceae</taxon>
        <taxon>Listeria</taxon>
    </lineage>
</organism>